<protein>
    <recommendedName>
        <fullName evidence="1">Methionyl-tRNA formyltransferase</fullName>
        <ecNumber evidence="1">2.1.2.9</ecNumber>
    </recommendedName>
</protein>
<evidence type="ECO:0000255" key="1">
    <source>
        <dbReference type="HAMAP-Rule" id="MF_00182"/>
    </source>
</evidence>
<comment type="function">
    <text evidence="1">Attaches a formyl group to the free amino group of methionyl-tRNA(fMet). The formyl group appears to play a dual role in the initiator identity of N-formylmethionyl-tRNA by promoting its recognition by IF2 and preventing the misappropriation of this tRNA by the elongation apparatus.</text>
</comment>
<comment type="catalytic activity">
    <reaction evidence="1">
        <text>L-methionyl-tRNA(fMet) + (6R)-10-formyltetrahydrofolate = N-formyl-L-methionyl-tRNA(fMet) + (6S)-5,6,7,8-tetrahydrofolate + H(+)</text>
        <dbReference type="Rhea" id="RHEA:24380"/>
        <dbReference type="Rhea" id="RHEA-COMP:9952"/>
        <dbReference type="Rhea" id="RHEA-COMP:9953"/>
        <dbReference type="ChEBI" id="CHEBI:15378"/>
        <dbReference type="ChEBI" id="CHEBI:57453"/>
        <dbReference type="ChEBI" id="CHEBI:78530"/>
        <dbReference type="ChEBI" id="CHEBI:78844"/>
        <dbReference type="ChEBI" id="CHEBI:195366"/>
        <dbReference type="EC" id="2.1.2.9"/>
    </reaction>
</comment>
<comment type="similarity">
    <text evidence="1">Belongs to the Fmt family.</text>
</comment>
<organism>
    <name type="scientific">Mesoplasma florum (strain ATCC 33453 / NBRC 100688 / NCTC 11704 / L1)</name>
    <name type="common">Acholeplasma florum</name>
    <dbReference type="NCBI Taxonomy" id="265311"/>
    <lineage>
        <taxon>Bacteria</taxon>
        <taxon>Bacillati</taxon>
        <taxon>Mycoplasmatota</taxon>
        <taxon>Mollicutes</taxon>
        <taxon>Entomoplasmatales</taxon>
        <taxon>Entomoplasmataceae</taxon>
        <taxon>Mesoplasma</taxon>
    </lineage>
</organism>
<proteinExistence type="inferred from homology"/>
<dbReference type="EC" id="2.1.2.9" evidence="1"/>
<dbReference type="EMBL" id="AE017263">
    <property type="protein sequence ID" value="AAT75768.1"/>
    <property type="molecule type" value="Genomic_DNA"/>
</dbReference>
<dbReference type="RefSeq" id="YP_053652.1">
    <property type="nucleotide sequence ID" value="NC_006055.1"/>
</dbReference>
<dbReference type="SMR" id="Q6F155"/>
<dbReference type="STRING" id="265311.Mfl409"/>
<dbReference type="PaxDb" id="265311-Mfl409"/>
<dbReference type="EnsemblBacteria" id="AAT75768">
    <property type="protein sequence ID" value="AAT75768"/>
    <property type="gene ID" value="Mfl409"/>
</dbReference>
<dbReference type="KEGG" id="mfl:Mfl409"/>
<dbReference type="PATRIC" id="fig|265311.5.peg.409"/>
<dbReference type="eggNOG" id="COG0223">
    <property type="taxonomic scope" value="Bacteria"/>
</dbReference>
<dbReference type="HOGENOM" id="CLU_033347_1_1_14"/>
<dbReference type="OrthoDB" id="9802815at2"/>
<dbReference type="Proteomes" id="UP000006647">
    <property type="component" value="Chromosome"/>
</dbReference>
<dbReference type="GO" id="GO:0005829">
    <property type="term" value="C:cytosol"/>
    <property type="evidence" value="ECO:0007669"/>
    <property type="project" value="TreeGrafter"/>
</dbReference>
<dbReference type="GO" id="GO:0004479">
    <property type="term" value="F:methionyl-tRNA formyltransferase activity"/>
    <property type="evidence" value="ECO:0007669"/>
    <property type="project" value="UniProtKB-UniRule"/>
</dbReference>
<dbReference type="CDD" id="cd08646">
    <property type="entry name" value="FMT_core_Met-tRNA-FMT_N"/>
    <property type="match status" value="1"/>
</dbReference>
<dbReference type="CDD" id="cd08704">
    <property type="entry name" value="Met_tRNA_FMT_C"/>
    <property type="match status" value="1"/>
</dbReference>
<dbReference type="Gene3D" id="3.40.50.12230">
    <property type="match status" value="1"/>
</dbReference>
<dbReference type="HAMAP" id="MF_00182">
    <property type="entry name" value="Formyl_trans"/>
    <property type="match status" value="1"/>
</dbReference>
<dbReference type="InterPro" id="IPR005794">
    <property type="entry name" value="Fmt"/>
</dbReference>
<dbReference type="InterPro" id="IPR005793">
    <property type="entry name" value="Formyl_trans_C"/>
</dbReference>
<dbReference type="InterPro" id="IPR002376">
    <property type="entry name" value="Formyl_transf_N"/>
</dbReference>
<dbReference type="InterPro" id="IPR036477">
    <property type="entry name" value="Formyl_transf_N_sf"/>
</dbReference>
<dbReference type="InterPro" id="IPR011034">
    <property type="entry name" value="Formyl_transferase-like_C_sf"/>
</dbReference>
<dbReference type="InterPro" id="IPR001555">
    <property type="entry name" value="GART_AS"/>
</dbReference>
<dbReference type="InterPro" id="IPR044135">
    <property type="entry name" value="Met-tRNA-FMT_C"/>
</dbReference>
<dbReference type="InterPro" id="IPR041711">
    <property type="entry name" value="Met-tRNA-FMT_N"/>
</dbReference>
<dbReference type="NCBIfam" id="TIGR00460">
    <property type="entry name" value="fmt"/>
    <property type="match status" value="1"/>
</dbReference>
<dbReference type="PANTHER" id="PTHR11138">
    <property type="entry name" value="METHIONYL-TRNA FORMYLTRANSFERASE"/>
    <property type="match status" value="1"/>
</dbReference>
<dbReference type="PANTHER" id="PTHR11138:SF5">
    <property type="entry name" value="METHIONYL-TRNA FORMYLTRANSFERASE, MITOCHONDRIAL"/>
    <property type="match status" value="1"/>
</dbReference>
<dbReference type="Pfam" id="PF02911">
    <property type="entry name" value="Formyl_trans_C"/>
    <property type="match status" value="1"/>
</dbReference>
<dbReference type="Pfam" id="PF00551">
    <property type="entry name" value="Formyl_trans_N"/>
    <property type="match status" value="1"/>
</dbReference>
<dbReference type="SUPFAM" id="SSF50486">
    <property type="entry name" value="FMT C-terminal domain-like"/>
    <property type="match status" value="1"/>
</dbReference>
<dbReference type="SUPFAM" id="SSF53328">
    <property type="entry name" value="Formyltransferase"/>
    <property type="match status" value="1"/>
</dbReference>
<dbReference type="PROSITE" id="PS00373">
    <property type="entry name" value="GART"/>
    <property type="match status" value="1"/>
</dbReference>
<name>FMT_MESFL</name>
<feature type="chain" id="PRO_0000082991" description="Methionyl-tRNA formyltransferase">
    <location>
        <begin position="1"/>
        <end position="313"/>
    </location>
</feature>
<feature type="binding site" evidence="1">
    <location>
        <begin position="111"/>
        <end position="114"/>
    </location>
    <ligand>
        <name>(6S)-5,6,7,8-tetrahydrofolate</name>
        <dbReference type="ChEBI" id="CHEBI:57453"/>
    </ligand>
</feature>
<accession>Q6F155</accession>
<gene>
    <name evidence="1" type="primary">fmt</name>
    <name type="ordered locus">Mfl409</name>
</gene>
<reference key="1">
    <citation type="submission" date="2004-06" db="EMBL/GenBank/DDBJ databases">
        <authorList>
            <person name="Birren B.W."/>
            <person name="Stange-Thomann N."/>
            <person name="Hafez N."/>
            <person name="DeCaprio D."/>
            <person name="Fisher S."/>
            <person name="Butler J."/>
            <person name="Elkins T."/>
            <person name="Kodira C.D."/>
            <person name="Major J."/>
            <person name="Wang S."/>
            <person name="Nicol R."/>
            <person name="Nusbaum C."/>
        </authorList>
    </citation>
    <scope>NUCLEOTIDE SEQUENCE [LARGE SCALE GENOMIC DNA]</scope>
    <source>
        <strain>ATCC 33453 / NBRC 100688 / NCTC 11704 / L1</strain>
    </source>
</reference>
<sequence>MEKIKVIFCGTPQIGADILTTLTEMENVEVVLVISQPDRPVGRKKELKPTPVKEIALKNNLKIIQPVKISEAYEEIAQIESDFIVTCAYGQFVPTKILDLPKIDSINVHGSLLPKYRGGAPIQYAIKNGDSKTGISIMKMVKKMDAGDYYIQESIDIEETDDTGIMFEKLAKLGQKMIKENLLKIYNNELPPIAQNEDEVTFSKNISTEEEKINWNDLSVNVWNHIRSLSPWPIAHTFKGEERYKIQKVQILNNNVEAKPGTIVNISENGIDIQTKDGQVQILLIQKPGKKMMEASSYKLNNLSDLKVGDCFE</sequence>
<keyword id="KW-0648">Protein biosynthesis</keyword>
<keyword id="KW-1185">Reference proteome</keyword>
<keyword id="KW-0808">Transferase</keyword>